<reference key="1">
    <citation type="journal article" date="2011" name="J. Bacteriol.">
        <title>Comparative genomics of 28 Salmonella enterica isolates: evidence for CRISPR-mediated adaptive sublineage evolution.</title>
        <authorList>
            <person name="Fricke W.F."/>
            <person name="Mammel M.K."/>
            <person name="McDermott P.F."/>
            <person name="Tartera C."/>
            <person name="White D.G."/>
            <person name="Leclerc J.E."/>
            <person name="Ravel J."/>
            <person name="Cebula T.A."/>
        </authorList>
    </citation>
    <scope>NUCLEOTIDE SEQUENCE [LARGE SCALE GENOMIC DNA]</scope>
    <source>
        <strain>CVM19633</strain>
    </source>
</reference>
<name>ERPA_SALSV</name>
<evidence type="ECO:0000255" key="1">
    <source>
        <dbReference type="HAMAP-Rule" id="MF_01380"/>
    </source>
</evidence>
<feature type="chain" id="PRO_1000144935" description="Iron-sulfur cluster insertion protein ErpA">
    <location>
        <begin position="1"/>
        <end position="114"/>
    </location>
</feature>
<feature type="binding site" evidence="1">
    <location>
        <position position="42"/>
    </location>
    <ligand>
        <name>iron-sulfur cluster</name>
        <dbReference type="ChEBI" id="CHEBI:30408"/>
    </ligand>
</feature>
<feature type="binding site" evidence="1">
    <location>
        <position position="106"/>
    </location>
    <ligand>
        <name>iron-sulfur cluster</name>
        <dbReference type="ChEBI" id="CHEBI:30408"/>
    </ligand>
</feature>
<feature type="binding site" evidence="1">
    <location>
        <position position="108"/>
    </location>
    <ligand>
        <name>iron-sulfur cluster</name>
        <dbReference type="ChEBI" id="CHEBI:30408"/>
    </ligand>
</feature>
<comment type="function">
    <text evidence="1">Required for insertion of 4Fe-4S clusters for at least IspG.</text>
</comment>
<comment type="cofactor">
    <cofactor evidence="1">
        <name>iron-sulfur cluster</name>
        <dbReference type="ChEBI" id="CHEBI:30408"/>
    </cofactor>
    <text evidence="1">Binds 1 iron-sulfur cluster per subunit.</text>
</comment>
<comment type="subunit">
    <text evidence="1">Homodimer.</text>
</comment>
<comment type="similarity">
    <text evidence="1">Belongs to the HesB/IscA family.</text>
</comment>
<sequence length="114" mass="12099">MSDDVALPLQFTDAAANKVKSLIADEDNPNLKLRVYITGGGCSGFQYGFTFDDQVNEGDMTIEKQGVGLVVDPMSLQYLVGGSVDYTEGLEGSRFIVTNPNAKSTCGCGSSFSI</sequence>
<keyword id="KW-0408">Iron</keyword>
<keyword id="KW-0411">Iron-sulfur</keyword>
<keyword id="KW-0479">Metal-binding</keyword>
<organism>
    <name type="scientific">Salmonella schwarzengrund (strain CVM19633)</name>
    <dbReference type="NCBI Taxonomy" id="439843"/>
    <lineage>
        <taxon>Bacteria</taxon>
        <taxon>Pseudomonadati</taxon>
        <taxon>Pseudomonadota</taxon>
        <taxon>Gammaproteobacteria</taxon>
        <taxon>Enterobacterales</taxon>
        <taxon>Enterobacteriaceae</taxon>
        <taxon>Salmonella</taxon>
    </lineage>
</organism>
<protein>
    <recommendedName>
        <fullName evidence="1">Iron-sulfur cluster insertion protein ErpA</fullName>
    </recommendedName>
</protein>
<dbReference type="EMBL" id="CP001127">
    <property type="protein sequence ID" value="ACF92984.1"/>
    <property type="molecule type" value="Genomic_DNA"/>
</dbReference>
<dbReference type="RefSeq" id="WP_001278668.1">
    <property type="nucleotide sequence ID" value="NC_011094.1"/>
</dbReference>
<dbReference type="SMR" id="B4TXQ8"/>
<dbReference type="GeneID" id="66754727"/>
<dbReference type="KEGG" id="sew:SeSA_A0227"/>
<dbReference type="HOGENOM" id="CLU_069054_5_3_6"/>
<dbReference type="Proteomes" id="UP000001865">
    <property type="component" value="Chromosome"/>
</dbReference>
<dbReference type="GO" id="GO:0005829">
    <property type="term" value="C:cytosol"/>
    <property type="evidence" value="ECO:0007669"/>
    <property type="project" value="TreeGrafter"/>
</dbReference>
<dbReference type="GO" id="GO:0051537">
    <property type="term" value="F:2 iron, 2 sulfur cluster binding"/>
    <property type="evidence" value="ECO:0007669"/>
    <property type="project" value="UniProtKB-ARBA"/>
</dbReference>
<dbReference type="GO" id="GO:0051539">
    <property type="term" value="F:4 iron, 4 sulfur cluster binding"/>
    <property type="evidence" value="ECO:0007669"/>
    <property type="project" value="TreeGrafter"/>
</dbReference>
<dbReference type="GO" id="GO:0005506">
    <property type="term" value="F:iron ion binding"/>
    <property type="evidence" value="ECO:0007669"/>
    <property type="project" value="UniProtKB-UniRule"/>
</dbReference>
<dbReference type="GO" id="GO:0016226">
    <property type="term" value="P:iron-sulfur cluster assembly"/>
    <property type="evidence" value="ECO:0007669"/>
    <property type="project" value="UniProtKB-UniRule"/>
</dbReference>
<dbReference type="FunFam" id="2.60.300.12:FF:000002">
    <property type="entry name" value="Iron-sulfur cluster insertion protein ErpA"/>
    <property type="match status" value="1"/>
</dbReference>
<dbReference type="Gene3D" id="2.60.300.12">
    <property type="entry name" value="HesB-like domain"/>
    <property type="match status" value="1"/>
</dbReference>
<dbReference type="HAMAP" id="MF_01380">
    <property type="entry name" value="Fe_S_insert_ErpA"/>
    <property type="match status" value="1"/>
</dbReference>
<dbReference type="InterPro" id="IPR000361">
    <property type="entry name" value="FeS_biogenesis"/>
</dbReference>
<dbReference type="InterPro" id="IPR016092">
    <property type="entry name" value="FeS_cluster_insertion"/>
</dbReference>
<dbReference type="InterPro" id="IPR017870">
    <property type="entry name" value="FeS_cluster_insertion_CS"/>
</dbReference>
<dbReference type="InterPro" id="IPR023063">
    <property type="entry name" value="FeS_cluster_insertion_RrpA"/>
</dbReference>
<dbReference type="InterPro" id="IPR035903">
    <property type="entry name" value="HesB-like_dom_sf"/>
</dbReference>
<dbReference type="NCBIfam" id="TIGR00049">
    <property type="entry name" value="iron-sulfur cluster assembly accessory protein"/>
    <property type="match status" value="1"/>
</dbReference>
<dbReference type="NCBIfam" id="NF010147">
    <property type="entry name" value="PRK13623.1"/>
    <property type="match status" value="1"/>
</dbReference>
<dbReference type="PANTHER" id="PTHR43011">
    <property type="entry name" value="IRON-SULFUR CLUSTER ASSEMBLY 2 HOMOLOG, MITOCHONDRIAL"/>
    <property type="match status" value="1"/>
</dbReference>
<dbReference type="PANTHER" id="PTHR43011:SF1">
    <property type="entry name" value="IRON-SULFUR CLUSTER ASSEMBLY 2 HOMOLOG, MITOCHONDRIAL"/>
    <property type="match status" value="1"/>
</dbReference>
<dbReference type="Pfam" id="PF01521">
    <property type="entry name" value="Fe-S_biosyn"/>
    <property type="match status" value="1"/>
</dbReference>
<dbReference type="SUPFAM" id="SSF89360">
    <property type="entry name" value="HesB-like domain"/>
    <property type="match status" value="1"/>
</dbReference>
<dbReference type="PROSITE" id="PS01152">
    <property type="entry name" value="HESB"/>
    <property type="match status" value="1"/>
</dbReference>
<gene>
    <name evidence="1" type="primary">erpA</name>
    <name type="ordered locus">SeSA_A0227</name>
</gene>
<accession>B4TXQ8</accession>
<proteinExistence type="inferred from homology"/>